<dbReference type="EC" id="2.4.1.325" evidence="1"/>
<dbReference type="EMBL" id="CP001164">
    <property type="protein sequence ID" value="ACI35533.1"/>
    <property type="molecule type" value="Genomic_DNA"/>
</dbReference>
<dbReference type="RefSeq" id="WP_000217254.1">
    <property type="nucleotide sequence ID" value="NC_011353.1"/>
</dbReference>
<dbReference type="SMR" id="B5YY41"/>
<dbReference type="CAZy" id="GT56">
    <property type="family name" value="Glycosyltransferase Family 56"/>
</dbReference>
<dbReference type="KEGG" id="ecf:ECH74115_5226"/>
<dbReference type="HOGENOM" id="CLU_066584_0_0_6"/>
<dbReference type="UniPathway" id="UPA00566"/>
<dbReference type="GO" id="GO:0005886">
    <property type="term" value="C:plasma membrane"/>
    <property type="evidence" value="ECO:0007669"/>
    <property type="project" value="UniProtKB-SubCell"/>
</dbReference>
<dbReference type="GO" id="GO:0102031">
    <property type="term" value="F:4-acetamido-4,6-dideoxy-D-galactose transferase activity"/>
    <property type="evidence" value="ECO:0007669"/>
    <property type="project" value="UniProtKB-EC"/>
</dbReference>
<dbReference type="GO" id="GO:0008417">
    <property type="term" value="F:fucosyltransferase activity"/>
    <property type="evidence" value="ECO:0007669"/>
    <property type="project" value="InterPro"/>
</dbReference>
<dbReference type="GO" id="GO:0009246">
    <property type="term" value="P:enterobacterial common antigen biosynthetic process"/>
    <property type="evidence" value="ECO:0007669"/>
    <property type="project" value="UniProtKB-UniRule"/>
</dbReference>
<dbReference type="GO" id="GO:0036065">
    <property type="term" value="P:fucosylation"/>
    <property type="evidence" value="ECO:0007669"/>
    <property type="project" value="InterPro"/>
</dbReference>
<dbReference type="HAMAP" id="MF_01002">
    <property type="entry name" value="WecF_RffT"/>
    <property type="match status" value="1"/>
</dbReference>
<dbReference type="InterPro" id="IPR009993">
    <property type="entry name" value="WecF"/>
</dbReference>
<dbReference type="NCBIfam" id="NF002752">
    <property type="entry name" value="PRK02797.1-1"/>
    <property type="match status" value="1"/>
</dbReference>
<dbReference type="NCBIfam" id="NF002753">
    <property type="entry name" value="PRK02797.1-2"/>
    <property type="match status" value="1"/>
</dbReference>
<dbReference type="NCBIfam" id="NF002754">
    <property type="entry name" value="PRK02797.1-3"/>
    <property type="match status" value="1"/>
</dbReference>
<dbReference type="Pfam" id="PF07429">
    <property type="entry name" value="Glyco_transf_56"/>
    <property type="match status" value="1"/>
</dbReference>
<name>WECF_ECO5E</name>
<comment type="function">
    <text evidence="1">Catalyzes the synthesis of Und-PP-GlcNAc-ManNAcA-Fuc4NAc (Lipid III), the third lipid-linked intermediate involved in ECA synthesis.</text>
</comment>
<comment type="catalytic activity">
    <reaction evidence="1">
        <text>beta-D-ManNAcA-(1-&gt;4)-alpha-D-GlcNAc-di-trans,octa-cis-undecaprenyl diphosphate + dTDP-4-acetamido-4,6-dideoxy-alpha-D-galactose = alpha-D-FucNAc4-(1-&gt;4)-beta-D-ManNAcA-(1-&gt;4)-D-GlcNAc-undecaprenyl diphosphate + dTDP + H(+)</text>
        <dbReference type="Rhea" id="RHEA:28759"/>
        <dbReference type="ChEBI" id="CHEBI:15378"/>
        <dbReference type="ChEBI" id="CHEBI:58369"/>
        <dbReference type="ChEBI" id="CHEBI:61495"/>
        <dbReference type="ChEBI" id="CHEBI:61496"/>
        <dbReference type="ChEBI" id="CHEBI:68493"/>
        <dbReference type="EC" id="2.4.1.325"/>
    </reaction>
</comment>
<comment type="pathway">
    <text evidence="1">Bacterial outer membrane biogenesis; enterobacterial common antigen biosynthesis.</text>
</comment>
<comment type="subcellular location">
    <subcellularLocation>
        <location evidence="1">Cell inner membrane</location>
        <topology evidence="1">Peripheral membrane protein</topology>
    </subcellularLocation>
</comment>
<comment type="similarity">
    <text evidence="1">Belongs to the glycosyltransferase 56 family.</text>
</comment>
<gene>
    <name evidence="1" type="primary">wecF</name>
    <name evidence="1" type="synonym">rffT</name>
    <name type="ordered locus">ECH74115_5226</name>
</gene>
<accession>B5YY41</accession>
<proteinExistence type="inferred from homology"/>
<evidence type="ECO:0000255" key="1">
    <source>
        <dbReference type="HAMAP-Rule" id="MF_01002"/>
    </source>
</evidence>
<feature type="chain" id="PRO_1000134595" description="TDP-N-acetylfucosamine:lipid II N-acetylfucosaminyltransferase">
    <location>
        <begin position="1"/>
        <end position="359"/>
    </location>
</feature>
<sequence length="359" mass="40585">MTVLIHVLGSDIPHHNRTVLRFFNDALAATSEHAREFMVVGKDDGLSDSCPALSVQFFPGKKSLAEAVIAKAKANRQQRFFFHGQFNPTLWLALLSGGIKPSQFYWHIWGADLYELSSGLRYKLFYPLRRLAQKRVGCVFATRGDLSFFAKTHPKVRGELLYFPTRMDASLNTMANDRQREGKMTILVGNSGDRSNEHIAALRAVHQQFGDTVKVVVPMGYPPHNEAYIEEVRQAGLELFSEENLQVLSEKLEFDAYLTLLRQCDLGYFIFARQQGIGTLCLLIQAGIPCVLNRENPFWQDMTEQHLPVLFTTDDLNEDIVREAQRQLASVDKNTIAFFSPNYLQGWQRALAIAAGEVA</sequence>
<keyword id="KW-0997">Cell inner membrane</keyword>
<keyword id="KW-1003">Cell membrane</keyword>
<keyword id="KW-0328">Glycosyltransferase</keyword>
<keyword id="KW-0472">Membrane</keyword>
<keyword id="KW-0808">Transferase</keyword>
<organism>
    <name type="scientific">Escherichia coli O157:H7 (strain EC4115 / EHEC)</name>
    <dbReference type="NCBI Taxonomy" id="444450"/>
    <lineage>
        <taxon>Bacteria</taxon>
        <taxon>Pseudomonadati</taxon>
        <taxon>Pseudomonadota</taxon>
        <taxon>Gammaproteobacteria</taxon>
        <taxon>Enterobacterales</taxon>
        <taxon>Enterobacteriaceae</taxon>
        <taxon>Escherichia</taxon>
    </lineage>
</organism>
<protein>
    <recommendedName>
        <fullName evidence="1">TDP-N-acetylfucosamine:lipid II N-acetylfucosaminyltransferase</fullName>
        <ecNumber evidence="1">2.4.1.325</ecNumber>
    </recommendedName>
    <alternativeName>
        <fullName evidence="1">4-alpha-L-fucosyltransferase</fullName>
    </alternativeName>
    <alternativeName>
        <fullName evidence="1">TDP-Fuc4NAc:lipid II Fuc4NAc transferase</fullName>
        <shortName evidence="1">Fuc4NAc transferase</shortName>
    </alternativeName>
</protein>
<reference key="1">
    <citation type="journal article" date="2011" name="Proc. Natl. Acad. Sci. U.S.A.">
        <title>Genomic anatomy of Escherichia coli O157:H7 outbreaks.</title>
        <authorList>
            <person name="Eppinger M."/>
            <person name="Mammel M.K."/>
            <person name="Leclerc J.E."/>
            <person name="Ravel J."/>
            <person name="Cebula T.A."/>
        </authorList>
    </citation>
    <scope>NUCLEOTIDE SEQUENCE [LARGE SCALE GENOMIC DNA]</scope>
    <source>
        <strain>EC4115 / EHEC</strain>
    </source>
</reference>